<gene>
    <name evidence="1" type="primary">opgH</name>
    <name type="ordered locus">xcc-b100_0681</name>
</gene>
<organism>
    <name type="scientific">Xanthomonas campestris pv. campestris (strain B100)</name>
    <dbReference type="NCBI Taxonomy" id="509169"/>
    <lineage>
        <taxon>Bacteria</taxon>
        <taxon>Pseudomonadati</taxon>
        <taxon>Pseudomonadota</taxon>
        <taxon>Gammaproteobacteria</taxon>
        <taxon>Lysobacterales</taxon>
        <taxon>Lysobacteraceae</taxon>
        <taxon>Xanthomonas</taxon>
    </lineage>
</organism>
<feature type="chain" id="PRO_1000136660" description="Glucans biosynthesis glucosyltransferase H">
    <location>
        <begin position="1"/>
        <end position="645"/>
    </location>
</feature>
<feature type="transmembrane region" description="Helical" evidence="1">
    <location>
        <begin position="64"/>
        <end position="84"/>
    </location>
</feature>
<feature type="transmembrane region" description="Helical" evidence="1">
    <location>
        <begin position="98"/>
        <end position="118"/>
    </location>
</feature>
<feature type="transmembrane region" description="Helical" evidence="1">
    <location>
        <begin position="423"/>
        <end position="443"/>
    </location>
</feature>
<feature type="transmembrane region" description="Helical" evidence="1">
    <location>
        <begin position="465"/>
        <end position="485"/>
    </location>
</feature>
<feature type="transmembrane region" description="Helical" evidence="1">
    <location>
        <begin position="504"/>
        <end position="524"/>
    </location>
</feature>
<feature type="transmembrane region" description="Helical" evidence="1">
    <location>
        <begin position="558"/>
        <end position="578"/>
    </location>
</feature>
<feature type="transmembrane region" description="Helical" evidence="1">
    <location>
        <begin position="580"/>
        <end position="600"/>
    </location>
</feature>
<feature type="region of interest" description="Disordered" evidence="2">
    <location>
        <begin position="1"/>
        <end position="28"/>
    </location>
</feature>
<keyword id="KW-0997">Cell inner membrane</keyword>
<keyword id="KW-1003">Cell membrane</keyword>
<keyword id="KW-0328">Glycosyltransferase</keyword>
<keyword id="KW-0472">Membrane</keyword>
<keyword id="KW-0808">Transferase</keyword>
<keyword id="KW-0812">Transmembrane</keyword>
<keyword id="KW-1133">Transmembrane helix</keyword>
<accession>B0RNI5</accession>
<dbReference type="EC" id="2.4.1.-" evidence="1"/>
<dbReference type="EMBL" id="AM920689">
    <property type="protein sequence ID" value="CAP50020.1"/>
    <property type="molecule type" value="Genomic_DNA"/>
</dbReference>
<dbReference type="KEGG" id="xca:xcc-b100_0681"/>
<dbReference type="HOGENOM" id="CLU_015730_1_0_6"/>
<dbReference type="UniPathway" id="UPA00637"/>
<dbReference type="Proteomes" id="UP000001188">
    <property type="component" value="Chromosome"/>
</dbReference>
<dbReference type="GO" id="GO:0005886">
    <property type="term" value="C:plasma membrane"/>
    <property type="evidence" value="ECO:0007669"/>
    <property type="project" value="UniProtKB-SubCell"/>
</dbReference>
<dbReference type="GO" id="GO:0016758">
    <property type="term" value="F:hexosyltransferase activity"/>
    <property type="evidence" value="ECO:0007669"/>
    <property type="project" value="UniProtKB-UniRule"/>
</dbReference>
<dbReference type="GO" id="GO:0009250">
    <property type="term" value="P:glucan biosynthetic process"/>
    <property type="evidence" value="ECO:0007669"/>
    <property type="project" value="UniProtKB-UniRule"/>
</dbReference>
<dbReference type="CDD" id="cd04191">
    <property type="entry name" value="Glucan_BSP_MdoH"/>
    <property type="match status" value="1"/>
</dbReference>
<dbReference type="Gene3D" id="3.90.550.10">
    <property type="entry name" value="Spore Coat Polysaccharide Biosynthesis Protein SpsA, Chain A"/>
    <property type="match status" value="1"/>
</dbReference>
<dbReference type="HAMAP" id="MF_01072">
    <property type="entry name" value="MdoH_OpgH"/>
    <property type="match status" value="1"/>
</dbReference>
<dbReference type="InterPro" id="IPR023725">
    <property type="entry name" value="Glucans_biosynth_gluTrFase_H"/>
</dbReference>
<dbReference type="InterPro" id="IPR001173">
    <property type="entry name" value="Glyco_trans_2-like"/>
</dbReference>
<dbReference type="InterPro" id="IPR050321">
    <property type="entry name" value="Glycosyltr_2/OpgH_subfam"/>
</dbReference>
<dbReference type="InterPro" id="IPR029044">
    <property type="entry name" value="Nucleotide-diphossugar_trans"/>
</dbReference>
<dbReference type="NCBIfam" id="NF003956">
    <property type="entry name" value="PRK05454.1-3"/>
    <property type="match status" value="1"/>
</dbReference>
<dbReference type="NCBIfam" id="NF003957">
    <property type="entry name" value="PRK05454.1-4"/>
    <property type="match status" value="1"/>
</dbReference>
<dbReference type="NCBIfam" id="NF003958">
    <property type="entry name" value="PRK05454.2-1"/>
    <property type="match status" value="1"/>
</dbReference>
<dbReference type="NCBIfam" id="NF003962">
    <property type="entry name" value="PRK05454.2-5"/>
    <property type="match status" value="1"/>
</dbReference>
<dbReference type="PANTHER" id="PTHR43867">
    <property type="entry name" value="CELLULOSE SYNTHASE CATALYTIC SUBUNIT A [UDP-FORMING]"/>
    <property type="match status" value="1"/>
</dbReference>
<dbReference type="PANTHER" id="PTHR43867:SF5">
    <property type="entry name" value="GLUCANS BIOSYNTHESIS GLUCOSYLTRANSFERASE H"/>
    <property type="match status" value="1"/>
</dbReference>
<dbReference type="Pfam" id="PF13632">
    <property type="entry name" value="Glyco_trans_2_3"/>
    <property type="match status" value="1"/>
</dbReference>
<dbReference type="SUPFAM" id="SSF53448">
    <property type="entry name" value="Nucleotide-diphospho-sugar transferases"/>
    <property type="match status" value="1"/>
</dbReference>
<protein>
    <recommendedName>
        <fullName evidence="1">Glucans biosynthesis glucosyltransferase H</fullName>
        <ecNumber evidence="1">2.4.1.-</ecNumber>
    </recommendedName>
</protein>
<sequence>MDGTVTLSPAPTDLPPVSSLDAGQPTLPPEAPLAMPEQSLREGSLQVRHQRTSPMGIGLRRFYLIGGTLTATAVAVWVMLSVLWPGGFSVLEGCLLGLFVLLFAWIAMSFASAVAGFITVVARAGRKLGIDPDAPLPSLHTRTALLMPTYNEDPRRLLAGLQAIYESVAETGQLEHFDFFVLSDTTREHIGRAEEQVYAELCDSVGGHGRIFYRRRADNAARKAGNVADWVRRFGGNYPQMLILDADSVMTGDTIVRLVAGMEDNPDVGLIQTLPAVVNGQTLFARMQQFGGRVYGPIIAFGVAWWHGAESNYWGHNAIIRTQAFADHAGLPSLRGRKPFGGHVLSHDFVEAALMRRGGWAMHMVPYLQGSYEEGPPTLTDLLVRDRRWCQGNLQHAKVVGAKGLHWISRMHMMIGIGHYFTAPMWGMLMLVGIGIPLAGAGIDLAQGLPFSPARYWHGSSDGNAIWIFVCTMFVLLAPKLLGYIALLLNPRERRACGGAIRAALSILLETVLAALMAPVVMYLQSRGVFEVLAGKDSGWDAQVRDDGKLSWPALIRSYGGLSVFGLFMGTLAYLVSPSLAAWMAPVIVGMVVSIPVVAVTSLRRTGLALRRAGIFCIPEELDPPKVLVRASELRRAAALEPPLI</sequence>
<name>OPGH_XANCB</name>
<reference key="1">
    <citation type="journal article" date="2008" name="J. Biotechnol.">
        <title>The genome of Xanthomonas campestris pv. campestris B100 and its use for the reconstruction of metabolic pathways involved in xanthan biosynthesis.</title>
        <authorList>
            <person name="Vorhoelter F.-J."/>
            <person name="Schneiker S."/>
            <person name="Goesmann A."/>
            <person name="Krause L."/>
            <person name="Bekel T."/>
            <person name="Kaiser O."/>
            <person name="Linke B."/>
            <person name="Patschkowski T."/>
            <person name="Rueckert C."/>
            <person name="Schmid J."/>
            <person name="Sidhu V.K."/>
            <person name="Sieber V."/>
            <person name="Tauch A."/>
            <person name="Watt S.A."/>
            <person name="Weisshaar B."/>
            <person name="Becker A."/>
            <person name="Niehaus K."/>
            <person name="Puehler A."/>
        </authorList>
    </citation>
    <scope>NUCLEOTIDE SEQUENCE [LARGE SCALE GENOMIC DNA]</scope>
    <source>
        <strain>B100</strain>
    </source>
</reference>
<comment type="function">
    <text evidence="1">Involved in the biosynthesis of osmoregulated periplasmic glucans (OPGs).</text>
</comment>
<comment type="pathway">
    <text evidence="1">Glycan metabolism; osmoregulated periplasmic glucan (OPG) biosynthesis.</text>
</comment>
<comment type="subcellular location">
    <subcellularLocation>
        <location evidence="1">Cell inner membrane</location>
        <topology evidence="1">Multi-pass membrane protein</topology>
    </subcellularLocation>
</comment>
<comment type="similarity">
    <text evidence="1">Belongs to the glycosyltransferase 2 family. OpgH subfamily.</text>
</comment>
<proteinExistence type="inferred from homology"/>
<evidence type="ECO:0000255" key="1">
    <source>
        <dbReference type="HAMAP-Rule" id="MF_01072"/>
    </source>
</evidence>
<evidence type="ECO:0000256" key="2">
    <source>
        <dbReference type="SAM" id="MobiDB-lite"/>
    </source>
</evidence>